<gene>
    <name evidence="1" type="primary">rplN</name>
    <name type="ordered locus">SpyM50054</name>
</gene>
<reference key="1">
    <citation type="journal article" date="2007" name="J. Bacteriol.">
        <title>Complete genome of acute rheumatic fever-associated serotype M5 Streptococcus pyogenes strain Manfredo.</title>
        <authorList>
            <person name="Holden M.T.G."/>
            <person name="Scott A."/>
            <person name="Cherevach I."/>
            <person name="Chillingworth T."/>
            <person name="Churcher C."/>
            <person name="Cronin A."/>
            <person name="Dowd L."/>
            <person name="Feltwell T."/>
            <person name="Hamlin N."/>
            <person name="Holroyd S."/>
            <person name="Jagels K."/>
            <person name="Moule S."/>
            <person name="Mungall K."/>
            <person name="Quail M.A."/>
            <person name="Price C."/>
            <person name="Rabbinowitsch E."/>
            <person name="Sharp S."/>
            <person name="Skelton J."/>
            <person name="Whitehead S."/>
            <person name="Barrell B.G."/>
            <person name="Kehoe M."/>
            <person name="Parkhill J."/>
        </authorList>
    </citation>
    <scope>NUCLEOTIDE SEQUENCE [LARGE SCALE GENOMIC DNA]</scope>
    <source>
        <strain>Manfredo</strain>
    </source>
</reference>
<protein>
    <recommendedName>
        <fullName evidence="1">Large ribosomal subunit protein uL14</fullName>
    </recommendedName>
    <alternativeName>
        <fullName evidence="2">50S ribosomal protein L14</fullName>
    </alternativeName>
</protein>
<feature type="chain" id="PRO_1000055723" description="Large ribosomal subunit protein uL14">
    <location>
        <begin position="1"/>
        <end position="122"/>
    </location>
</feature>
<dbReference type="EMBL" id="AM295007">
    <property type="protein sequence ID" value="CAM29396.1"/>
    <property type="molecule type" value="Genomic_DNA"/>
</dbReference>
<dbReference type="RefSeq" id="WP_000615920.1">
    <property type="nucleotide sequence ID" value="NC_009332.1"/>
</dbReference>
<dbReference type="SMR" id="A2RC24"/>
<dbReference type="GeneID" id="83689563"/>
<dbReference type="KEGG" id="spf:SpyM50054"/>
<dbReference type="HOGENOM" id="CLU_095071_2_1_9"/>
<dbReference type="GO" id="GO:0022625">
    <property type="term" value="C:cytosolic large ribosomal subunit"/>
    <property type="evidence" value="ECO:0007669"/>
    <property type="project" value="TreeGrafter"/>
</dbReference>
<dbReference type="GO" id="GO:0070180">
    <property type="term" value="F:large ribosomal subunit rRNA binding"/>
    <property type="evidence" value="ECO:0007669"/>
    <property type="project" value="TreeGrafter"/>
</dbReference>
<dbReference type="GO" id="GO:0003735">
    <property type="term" value="F:structural constituent of ribosome"/>
    <property type="evidence" value="ECO:0007669"/>
    <property type="project" value="InterPro"/>
</dbReference>
<dbReference type="GO" id="GO:0006412">
    <property type="term" value="P:translation"/>
    <property type="evidence" value="ECO:0007669"/>
    <property type="project" value="UniProtKB-UniRule"/>
</dbReference>
<dbReference type="CDD" id="cd00337">
    <property type="entry name" value="Ribosomal_uL14"/>
    <property type="match status" value="1"/>
</dbReference>
<dbReference type="FunFam" id="2.40.150.20:FF:000001">
    <property type="entry name" value="50S ribosomal protein L14"/>
    <property type="match status" value="1"/>
</dbReference>
<dbReference type="Gene3D" id="2.40.150.20">
    <property type="entry name" value="Ribosomal protein L14"/>
    <property type="match status" value="1"/>
</dbReference>
<dbReference type="HAMAP" id="MF_01367">
    <property type="entry name" value="Ribosomal_uL14"/>
    <property type="match status" value="1"/>
</dbReference>
<dbReference type="InterPro" id="IPR000218">
    <property type="entry name" value="Ribosomal_uL14"/>
</dbReference>
<dbReference type="InterPro" id="IPR005745">
    <property type="entry name" value="Ribosomal_uL14_bac-type"/>
</dbReference>
<dbReference type="InterPro" id="IPR019972">
    <property type="entry name" value="Ribosomal_uL14_CS"/>
</dbReference>
<dbReference type="InterPro" id="IPR036853">
    <property type="entry name" value="Ribosomal_uL14_sf"/>
</dbReference>
<dbReference type="NCBIfam" id="TIGR01067">
    <property type="entry name" value="rplN_bact"/>
    <property type="match status" value="1"/>
</dbReference>
<dbReference type="PANTHER" id="PTHR11761">
    <property type="entry name" value="50S/60S RIBOSOMAL PROTEIN L14/L23"/>
    <property type="match status" value="1"/>
</dbReference>
<dbReference type="PANTHER" id="PTHR11761:SF3">
    <property type="entry name" value="LARGE RIBOSOMAL SUBUNIT PROTEIN UL14M"/>
    <property type="match status" value="1"/>
</dbReference>
<dbReference type="Pfam" id="PF00238">
    <property type="entry name" value="Ribosomal_L14"/>
    <property type="match status" value="1"/>
</dbReference>
<dbReference type="SMART" id="SM01374">
    <property type="entry name" value="Ribosomal_L14"/>
    <property type="match status" value="1"/>
</dbReference>
<dbReference type="SUPFAM" id="SSF50193">
    <property type="entry name" value="Ribosomal protein L14"/>
    <property type="match status" value="1"/>
</dbReference>
<dbReference type="PROSITE" id="PS00049">
    <property type="entry name" value="RIBOSOMAL_L14"/>
    <property type="match status" value="1"/>
</dbReference>
<proteinExistence type="inferred from homology"/>
<accession>A2RC24</accession>
<comment type="function">
    <text evidence="1">Binds to 23S rRNA. Forms part of two intersubunit bridges in the 70S ribosome.</text>
</comment>
<comment type="subunit">
    <text evidence="1">Part of the 50S ribosomal subunit. Forms a cluster with proteins L3 and L19. In the 70S ribosome, L14 and L19 interact and together make contacts with the 16S rRNA in bridges B5 and B8.</text>
</comment>
<comment type="similarity">
    <text evidence="1">Belongs to the universal ribosomal protein uL14 family.</text>
</comment>
<sequence>MIQQETRLKVADNSGAREILTIKVLGGSGRKFANIGDVIVASVKQATPGGAVKKGDVVKAVIVRTKTGARRPDGSYIKFDDNAAVIIRDDKTPRGTRIFGPVARELREGGYMKIVSLAPEVL</sequence>
<organism>
    <name type="scientific">Streptococcus pyogenes serotype M5 (strain Manfredo)</name>
    <dbReference type="NCBI Taxonomy" id="160491"/>
    <lineage>
        <taxon>Bacteria</taxon>
        <taxon>Bacillati</taxon>
        <taxon>Bacillota</taxon>
        <taxon>Bacilli</taxon>
        <taxon>Lactobacillales</taxon>
        <taxon>Streptococcaceae</taxon>
        <taxon>Streptococcus</taxon>
    </lineage>
</organism>
<keyword id="KW-0687">Ribonucleoprotein</keyword>
<keyword id="KW-0689">Ribosomal protein</keyword>
<keyword id="KW-0694">RNA-binding</keyword>
<keyword id="KW-0699">rRNA-binding</keyword>
<name>RL14_STRPG</name>
<evidence type="ECO:0000255" key="1">
    <source>
        <dbReference type="HAMAP-Rule" id="MF_01367"/>
    </source>
</evidence>
<evidence type="ECO:0000305" key="2"/>